<keyword id="KW-0067">ATP-binding</keyword>
<keyword id="KW-0319">Glycerol metabolism</keyword>
<keyword id="KW-0418">Kinase</keyword>
<keyword id="KW-0547">Nucleotide-binding</keyword>
<keyword id="KW-1185">Reference proteome</keyword>
<keyword id="KW-0808">Transferase</keyword>
<comment type="function">
    <text evidence="1">Key enzyme in the regulation of glycerol uptake and metabolism. Catalyzes the phosphorylation of glycerol to yield sn-glycerol 3-phosphate.</text>
</comment>
<comment type="catalytic activity">
    <reaction evidence="1">
        <text>glycerol + ATP = sn-glycerol 3-phosphate + ADP + H(+)</text>
        <dbReference type="Rhea" id="RHEA:21644"/>
        <dbReference type="ChEBI" id="CHEBI:15378"/>
        <dbReference type="ChEBI" id="CHEBI:17754"/>
        <dbReference type="ChEBI" id="CHEBI:30616"/>
        <dbReference type="ChEBI" id="CHEBI:57597"/>
        <dbReference type="ChEBI" id="CHEBI:456216"/>
        <dbReference type="EC" id="2.7.1.30"/>
    </reaction>
</comment>
<comment type="activity regulation">
    <text evidence="1">Inhibited by fructose 1,6-bisphosphate (FBP).</text>
</comment>
<comment type="pathway">
    <text evidence="1">Polyol metabolism; glycerol degradation via glycerol kinase pathway; sn-glycerol 3-phosphate from glycerol: step 1/1.</text>
</comment>
<comment type="similarity">
    <text evidence="1">Belongs to the FGGY kinase family.</text>
</comment>
<sequence>MTDTQNKNYIIALDQGTTSSRAIIFDRDANVVSTAQSEFVQHYPQAGWVEHDPMEIFATQTACMTKALAQADLHHDQIAAIGITNQRETTVIWERDTGRPIYNAIVWQCRRSTEICQQLKRDGLEEYIKDTTGLVLDPYFSGSKVKWILDHVEGSRERARKGELMFGTIDTWLIWKFTGGKVHVTDYTNASRTMLFNIHTLEWDQRMLDVLDIPREILPEVKSSSEVYGHSKSGIPIAGIAGDQQAALFGQMCVEPGQAKNTYGTGCFLLMNTGKKAVKSAHGMLTTIGCGPRGEVAYALEGAVFNGGSTVQWLRDELKLINDALDTEYFAGKVKDSNGVYLVPAFTGLGAPYWDPYARGALFGLTRGVKVDHIIRAALESIAYQTRDVLDAMQQDSGERLKSLRVDGGAVANNFLMQFQADILGTHVERPQMRETTALGAAFLAGLAIGFWSSLDELRNKAVIERVFEPACEEAHREKLYAGWQKAVARTRDWEPHENEE</sequence>
<protein>
    <recommendedName>
        <fullName evidence="1">Glycerol kinase</fullName>
        <ecNumber evidence="1">2.7.1.30</ecNumber>
    </recommendedName>
    <alternativeName>
        <fullName evidence="1">ATP:glycerol 3-phosphotransferase</fullName>
    </alternativeName>
    <alternativeName>
        <fullName evidence="1">Glycerokinase</fullName>
        <shortName evidence="1">GK</shortName>
    </alternativeName>
</protein>
<accession>Q87XL0</accession>
<proteinExistence type="inferred from homology"/>
<name>GLPK_PSESM</name>
<dbReference type="EC" id="2.7.1.30" evidence="1"/>
<dbReference type="EMBL" id="AE016853">
    <property type="protein sequence ID" value="AAO57624.1"/>
    <property type="molecule type" value="Genomic_DNA"/>
</dbReference>
<dbReference type="RefSeq" id="NP_793929.1">
    <property type="nucleotide sequence ID" value="NC_004578.1"/>
</dbReference>
<dbReference type="RefSeq" id="WP_005764834.1">
    <property type="nucleotide sequence ID" value="NC_004578.1"/>
</dbReference>
<dbReference type="SMR" id="Q87XL0"/>
<dbReference type="STRING" id="223283.PSPTO_4168"/>
<dbReference type="GeneID" id="1185848"/>
<dbReference type="KEGG" id="pst:PSPTO_4168"/>
<dbReference type="PATRIC" id="fig|223283.9.peg.4278"/>
<dbReference type="eggNOG" id="COG0554">
    <property type="taxonomic scope" value="Bacteria"/>
</dbReference>
<dbReference type="HOGENOM" id="CLU_009281_2_3_6"/>
<dbReference type="OrthoDB" id="9805576at2"/>
<dbReference type="PhylomeDB" id="Q87XL0"/>
<dbReference type="UniPathway" id="UPA00618">
    <property type="reaction ID" value="UER00672"/>
</dbReference>
<dbReference type="Proteomes" id="UP000002515">
    <property type="component" value="Chromosome"/>
</dbReference>
<dbReference type="GO" id="GO:0005829">
    <property type="term" value="C:cytosol"/>
    <property type="evidence" value="ECO:0007669"/>
    <property type="project" value="TreeGrafter"/>
</dbReference>
<dbReference type="GO" id="GO:0005524">
    <property type="term" value="F:ATP binding"/>
    <property type="evidence" value="ECO:0007669"/>
    <property type="project" value="UniProtKB-UniRule"/>
</dbReference>
<dbReference type="GO" id="GO:0004370">
    <property type="term" value="F:glycerol kinase activity"/>
    <property type="evidence" value="ECO:0000250"/>
    <property type="project" value="UniProtKB"/>
</dbReference>
<dbReference type="GO" id="GO:0019563">
    <property type="term" value="P:glycerol catabolic process"/>
    <property type="evidence" value="ECO:0007669"/>
    <property type="project" value="UniProtKB-UniRule"/>
</dbReference>
<dbReference type="GO" id="GO:0006071">
    <property type="term" value="P:glycerol metabolic process"/>
    <property type="evidence" value="ECO:0000250"/>
    <property type="project" value="UniProtKB"/>
</dbReference>
<dbReference type="GO" id="GO:0006072">
    <property type="term" value="P:glycerol-3-phosphate metabolic process"/>
    <property type="evidence" value="ECO:0007669"/>
    <property type="project" value="InterPro"/>
</dbReference>
<dbReference type="CDD" id="cd07786">
    <property type="entry name" value="FGGY_EcGK_like"/>
    <property type="match status" value="1"/>
</dbReference>
<dbReference type="FunFam" id="3.30.420.40:FF:000007">
    <property type="entry name" value="Glycerol kinase"/>
    <property type="match status" value="1"/>
</dbReference>
<dbReference type="FunFam" id="3.30.420.40:FF:000008">
    <property type="entry name" value="Glycerol kinase"/>
    <property type="match status" value="1"/>
</dbReference>
<dbReference type="Gene3D" id="3.30.420.40">
    <property type="match status" value="2"/>
</dbReference>
<dbReference type="HAMAP" id="MF_00186">
    <property type="entry name" value="Glycerol_kin"/>
    <property type="match status" value="1"/>
</dbReference>
<dbReference type="InterPro" id="IPR043129">
    <property type="entry name" value="ATPase_NBD"/>
</dbReference>
<dbReference type="InterPro" id="IPR000577">
    <property type="entry name" value="Carb_kinase_FGGY"/>
</dbReference>
<dbReference type="InterPro" id="IPR018483">
    <property type="entry name" value="Carb_kinase_FGGY_CS"/>
</dbReference>
<dbReference type="InterPro" id="IPR018485">
    <property type="entry name" value="FGGY_C"/>
</dbReference>
<dbReference type="InterPro" id="IPR018484">
    <property type="entry name" value="FGGY_N"/>
</dbReference>
<dbReference type="InterPro" id="IPR005999">
    <property type="entry name" value="Glycerol_kin"/>
</dbReference>
<dbReference type="NCBIfam" id="TIGR01311">
    <property type="entry name" value="glycerol_kin"/>
    <property type="match status" value="1"/>
</dbReference>
<dbReference type="NCBIfam" id="NF000756">
    <property type="entry name" value="PRK00047.1"/>
    <property type="match status" value="1"/>
</dbReference>
<dbReference type="PANTHER" id="PTHR10196:SF69">
    <property type="entry name" value="GLYCEROL KINASE"/>
    <property type="match status" value="1"/>
</dbReference>
<dbReference type="PANTHER" id="PTHR10196">
    <property type="entry name" value="SUGAR KINASE"/>
    <property type="match status" value="1"/>
</dbReference>
<dbReference type="Pfam" id="PF02782">
    <property type="entry name" value="FGGY_C"/>
    <property type="match status" value="1"/>
</dbReference>
<dbReference type="Pfam" id="PF00370">
    <property type="entry name" value="FGGY_N"/>
    <property type="match status" value="1"/>
</dbReference>
<dbReference type="PIRSF" id="PIRSF000538">
    <property type="entry name" value="GlpK"/>
    <property type="match status" value="1"/>
</dbReference>
<dbReference type="SUPFAM" id="SSF53067">
    <property type="entry name" value="Actin-like ATPase domain"/>
    <property type="match status" value="2"/>
</dbReference>
<dbReference type="PROSITE" id="PS00933">
    <property type="entry name" value="FGGY_KINASES_1"/>
    <property type="match status" value="1"/>
</dbReference>
<dbReference type="PROSITE" id="PS00445">
    <property type="entry name" value="FGGY_KINASES_2"/>
    <property type="match status" value="1"/>
</dbReference>
<feature type="chain" id="PRO_0000059479" description="Glycerol kinase">
    <location>
        <begin position="1"/>
        <end position="501"/>
    </location>
</feature>
<feature type="binding site" evidence="1">
    <location>
        <position position="17"/>
    </location>
    <ligand>
        <name>ADP</name>
        <dbReference type="ChEBI" id="CHEBI:456216"/>
    </ligand>
</feature>
<feature type="binding site" evidence="1">
    <location>
        <position position="17"/>
    </location>
    <ligand>
        <name>ATP</name>
        <dbReference type="ChEBI" id="CHEBI:30616"/>
    </ligand>
</feature>
<feature type="binding site" evidence="1">
    <location>
        <position position="17"/>
    </location>
    <ligand>
        <name>sn-glycerol 3-phosphate</name>
        <dbReference type="ChEBI" id="CHEBI:57597"/>
    </ligand>
</feature>
<feature type="binding site" evidence="1">
    <location>
        <position position="18"/>
    </location>
    <ligand>
        <name>ATP</name>
        <dbReference type="ChEBI" id="CHEBI:30616"/>
    </ligand>
</feature>
<feature type="binding site" evidence="1">
    <location>
        <position position="19"/>
    </location>
    <ligand>
        <name>ATP</name>
        <dbReference type="ChEBI" id="CHEBI:30616"/>
    </ligand>
</feature>
<feature type="binding site" evidence="1">
    <location>
        <position position="21"/>
    </location>
    <ligand>
        <name>ADP</name>
        <dbReference type="ChEBI" id="CHEBI:456216"/>
    </ligand>
</feature>
<feature type="binding site" evidence="1">
    <location>
        <position position="87"/>
    </location>
    <ligand>
        <name>glycerol</name>
        <dbReference type="ChEBI" id="CHEBI:17754"/>
    </ligand>
</feature>
<feature type="binding site" evidence="1">
    <location>
        <position position="87"/>
    </location>
    <ligand>
        <name>sn-glycerol 3-phosphate</name>
        <dbReference type="ChEBI" id="CHEBI:57597"/>
    </ligand>
</feature>
<feature type="binding site" evidence="1">
    <location>
        <position position="88"/>
    </location>
    <ligand>
        <name>glycerol</name>
        <dbReference type="ChEBI" id="CHEBI:17754"/>
    </ligand>
</feature>
<feature type="binding site" evidence="1">
    <location>
        <position position="88"/>
    </location>
    <ligand>
        <name>sn-glycerol 3-phosphate</name>
        <dbReference type="ChEBI" id="CHEBI:57597"/>
    </ligand>
</feature>
<feature type="binding site" evidence="1">
    <location>
        <position position="139"/>
    </location>
    <ligand>
        <name>glycerol</name>
        <dbReference type="ChEBI" id="CHEBI:17754"/>
    </ligand>
</feature>
<feature type="binding site" evidence="1">
    <location>
        <position position="139"/>
    </location>
    <ligand>
        <name>sn-glycerol 3-phosphate</name>
        <dbReference type="ChEBI" id="CHEBI:57597"/>
    </ligand>
</feature>
<feature type="binding site" evidence="1">
    <location>
        <position position="243"/>
    </location>
    <ligand>
        <name>glycerol</name>
        <dbReference type="ChEBI" id="CHEBI:17754"/>
    </ligand>
</feature>
<feature type="binding site" evidence="1">
    <location>
        <position position="243"/>
    </location>
    <ligand>
        <name>sn-glycerol 3-phosphate</name>
        <dbReference type="ChEBI" id="CHEBI:57597"/>
    </ligand>
</feature>
<feature type="binding site" evidence="1">
    <location>
        <position position="244"/>
    </location>
    <ligand>
        <name>glycerol</name>
        <dbReference type="ChEBI" id="CHEBI:17754"/>
    </ligand>
</feature>
<feature type="binding site" evidence="1">
    <location>
        <position position="265"/>
    </location>
    <ligand>
        <name>ADP</name>
        <dbReference type="ChEBI" id="CHEBI:456216"/>
    </ligand>
</feature>
<feature type="binding site" evidence="1">
    <location>
        <position position="265"/>
    </location>
    <ligand>
        <name>ATP</name>
        <dbReference type="ChEBI" id="CHEBI:30616"/>
    </ligand>
</feature>
<feature type="binding site" evidence="1">
    <location>
        <position position="308"/>
    </location>
    <ligand>
        <name>ADP</name>
        <dbReference type="ChEBI" id="CHEBI:456216"/>
    </ligand>
</feature>
<feature type="binding site" evidence="1">
    <location>
        <position position="308"/>
    </location>
    <ligand>
        <name>ATP</name>
        <dbReference type="ChEBI" id="CHEBI:30616"/>
    </ligand>
</feature>
<feature type="binding site" evidence="1">
    <location>
        <position position="312"/>
    </location>
    <ligand>
        <name>ATP</name>
        <dbReference type="ChEBI" id="CHEBI:30616"/>
    </ligand>
</feature>
<feature type="binding site" evidence="1">
    <location>
        <position position="409"/>
    </location>
    <ligand>
        <name>ADP</name>
        <dbReference type="ChEBI" id="CHEBI:456216"/>
    </ligand>
</feature>
<feature type="binding site" evidence="1">
    <location>
        <position position="409"/>
    </location>
    <ligand>
        <name>ATP</name>
        <dbReference type="ChEBI" id="CHEBI:30616"/>
    </ligand>
</feature>
<feature type="binding site" evidence="1">
    <location>
        <position position="413"/>
    </location>
    <ligand>
        <name>ADP</name>
        <dbReference type="ChEBI" id="CHEBI:456216"/>
    </ligand>
</feature>
<reference key="1">
    <citation type="journal article" date="2003" name="Proc. Natl. Acad. Sci. U.S.A.">
        <title>The complete genome sequence of the Arabidopsis and tomato pathogen Pseudomonas syringae pv. tomato DC3000.</title>
        <authorList>
            <person name="Buell C.R."/>
            <person name="Joardar V."/>
            <person name="Lindeberg M."/>
            <person name="Selengut J."/>
            <person name="Paulsen I.T."/>
            <person name="Gwinn M.L."/>
            <person name="Dodson R.J."/>
            <person name="DeBoy R.T."/>
            <person name="Durkin A.S."/>
            <person name="Kolonay J.F."/>
            <person name="Madupu R."/>
            <person name="Daugherty S.C."/>
            <person name="Brinkac L.M."/>
            <person name="Beanan M.J."/>
            <person name="Haft D.H."/>
            <person name="Nelson W.C."/>
            <person name="Davidsen T.M."/>
            <person name="Zafar N."/>
            <person name="Zhou L."/>
            <person name="Liu J."/>
            <person name="Yuan Q."/>
            <person name="Khouri H.M."/>
            <person name="Fedorova N.B."/>
            <person name="Tran B."/>
            <person name="Russell D."/>
            <person name="Berry K.J."/>
            <person name="Utterback T.R."/>
            <person name="Van Aken S.E."/>
            <person name="Feldblyum T.V."/>
            <person name="D'Ascenzo M."/>
            <person name="Deng W.-L."/>
            <person name="Ramos A.R."/>
            <person name="Alfano J.R."/>
            <person name="Cartinhour S."/>
            <person name="Chatterjee A.K."/>
            <person name="Delaney T.P."/>
            <person name="Lazarowitz S.G."/>
            <person name="Martin G.B."/>
            <person name="Schneider D.J."/>
            <person name="Tang X."/>
            <person name="Bender C.L."/>
            <person name="White O."/>
            <person name="Fraser C.M."/>
            <person name="Collmer A."/>
        </authorList>
    </citation>
    <scope>NUCLEOTIDE SEQUENCE [LARGE SCALE GENOMIC DNA]</scope>
    <source>
        <strain>ATCC BAA-871 / DC3000</strain>
    </source>
</reference>
<gene>
    <name evidence="1" type="primary">glpK</name>
    <name type="ordered locus">PSPTO_4168</name>
</gene>
<organism>
    <name type="scientific">Pseudomonas syringae pv. tomato (strain ATCC BAA-871 / DC3000)</name>
    <dbReference type="NCBI Taxonomy" id="223283"/>
    <lineage>
        <taxon>Bacteria</taxon>
        <taxon>Pseudomonadati</taxon>
        <taxon>Pseudomonadota</taxon>
        <taxon>Gammaproteobacteria</taxon>
        <taxon>Pseudomonadales</taxon>
        <taxon>Pseudomonadaceae</taxon>
        <taxon>Pseudomonas</taxon>
    </lineage>
</organism>
<evidence type="ECO:0000255" key="1">
    <source>
        <dbReference type="HAMAP-Rule" id="MF_00186"/>
    </source>
</evidence>